<comment type="function">
    <text evidence="1">Flavin prenyltransferase that catalyzes the synthesis of the prenylated FMN cofactor (prenyl-FMN) for 4-hydroxy-3-polyprenylbenzoic acid decarboxylase UbiD. The prenyltransferase is metal-independent and links a dimethylallyl moiety from dimethylallyl monophosphate (DMAP) to the flavin N5 and C6 atoms of FMN.</text>
</comment>
<comment type="catalytic activity">
    <reaction evidence="1">
        <text>dimethylallyl phosphate + FMNH2 = prenylated FMNH2 + phosphate</text>
        <dbReference type="Rhea" id="RHEA:37743"/>
        <dbReference type="ChEBI" id="CHEBI:43474"/>
        <dbReference type="ChEBI" id="CHEBI:57618"/>
        <dbReference type="ChEBI" id="CHEBI:87467"/>
        <dbReference type="ChEBI" id="CHEBI:88052"/>
        <dbReference type="EC" id="2.5.1.129"/>
    </reaction>
</comment>
<comment type="similarity">
    <text evidence="1">Belongs to the UbiX/PAD1 family.</text>
</comment>
<proteinExistence type="evidence at protein level"/>
<organism>
    <name type="scientific">Aquifex aeolicus (strain VF5)</name>
    <dbReference type="NCBI Taxonomy" id="224324"/>
    <lineage>
        <taxon>Bacteria</taxon>
        <taxon>Pseudomonadati</taxon>
        <taxon>Aquificota</taxon>
        <taxon>Aquificia</taxon>
        <taxon>Aquificales</taxon>
        <taxon>Aquificaceae</taxon>
        <taxon>Aquifex</taxon>
    </lineage>
</organism>
<reference key="1">
    <citation type="journal article" date="1998" name="Nature">
        <title>The complete genome of the hyperthermophilic bacterium Aquifex aeolicus.</title>
        <authorList>
            <person name="Deckert G."/>
            <person name="Warren P.V."/>
            <person name="Gaasterland T."/>
            <person name="Young W.G."/>
            <person name="Lenox A.L."/>
            <person name="Graham D.E."/>
            <person name="Overbeek R."/>
            <person name="Snead M.A."/>
            <person name="Keller M."/>
            <person name="Aujay M."/>
            <person name="Huber R."/>
            <person name="Feldman R.A."/>
            <person name="Short J.M."/>
            <person name="Olsen G.J."/>
            <person name="Swanson R.V."/>
        </authorList>
    </citation>
    <scope>NUCLEOTIDE SEQUENCE [LARGE SCALE GENOMIC DNA]</scope>
    <source>
        <strain>VF5</strain>
    </source>
</reference>
<protein>
    <recommendedName>
        <fullName evidence="1">Flavin prenyltransferase UbiX</fullName>
        <ecNumber evidence="1">2.5.1.129</ecNumber>
    </recommendedName>
</protein>
<dbReference type="EC" id="2.5.1.129" evidence="1"/>
<dbReference type="EMBL" id="AE000657">
    <property type="protein sequence ID" value="AAC06774.1"/>
    <property type="molecule type" value="Genomic_DNA"/>
</dbReference>
<dbReference type="PIR" id="G70347">
    <property type="entry name" value="G70347"/>
</dbReference>
<dbReference type="RefSeq" id="NP_213371.1">
    <property type="nucleotide sequence ID" value="NC_000918.1"/>
</dbReference>
<dbReference type="RefSeq" id="WP_010880309.1">
    <property type="nucleotide sequence ID" value="NC_000918.1"/>
</dbReference>
<dbReference type="PDB" id="2EJB">
    <property type="method" value="X-ray"/>
    <property type="resolution" value="2.15 A"/>
    <property type="chains" value="A=1-189"/>
</dbReference>
<dbReference type="PDBsum" id="2EJB"/>
<dbReference type="SMR" id="O66811"/>
<dbReference type="FunCoup" id="O66811">
    <property type="interactions" value="188"/>
</dbReference>
<dbReference type="STRING" id="224324.aq_528"/>
<dbReference type="EnsemblBacteria" id="AAC06774">
    <property type="protein sequence ID" value="AAC06774"/>
    <property type="gene ID" value="aq_528"/>
</dbReference>
<dbReference type="KEGG" id="aae:aq_528"/>
<dbReference type="PATRIC" id="fig|224324.8.peg.433"/>
<dbReference type="eggNOG" id="COG0163">
    <property type="taxonomic scope" value="Bacteria"/>
</dbReference>
<dbReference type="HOGENOM" id="CLU_074522_0_0_0"/>
<dbReference type="InParanoid" id="O66811"/>
<dbReference type="OrthoDB" id="9781577at2"/>
<dbReference type="EvolutionaryTrace" id="O66811"/>
<dbReference type="Proteomes" id="UP000000798">
    <property type="component" value="Chromosome"/>
</dbReference>
<dbReference type="GO" id="GO:0016831">
    <property type="term" value="F:carboxy-lyase activity"/>
    <property type="evidence" value="ECO:0000318"/>
    <property type="project" value="GO_Central"/>
</dbReference>
<dbReference type="GO" id="GO:0106141">
    <property type="term" value="F:flavin prenyltransferase activity"/>
    <property type="evidence" value="ECO:0007669"/>
    <property type="project" value="UniProtKB-EC"/>
</dbReference>
<dbReference type="FunFam" id="3.40.50.1950:FF:000001">
    <property type="entry name" value="Flavin prenyltransferase UbiX"/>
    <property type="match status" value="1"/>
</dbReference>
<dbReference type="Gene3D" id="3.40.50.1950">
    <property type="entry name" value="Flavin prenyltransferase-like"/>
    <property type="match status" value="1"/>
</dbReference>
<dbReference type="HAMAP" id="MF_01984">
    <property type="entry name" value="ubiX_pad"/>
    <property type="match status" value="1"/>
</dbReference>
<dbReference type="InterPro" id="IPR036551">
    <property type="entry name" value="Flavin_trans-like"/>
</dbReference>
<dbReference type="InterPro" id="IPR003382">
    <property type="entry name" value="Flavoprotein"/>
</dbReference>
<dbReference type="InterPro" id="IPR004507">
    <property type="entry name" value="UbiX-like"/>
</dbReference>
<dbReference type="NCBIfam" id="NF004685">
    <property type="entry name" value="PRK06029.1"/>
    <property type="match status" value="1"/>
</dbReference>
<dbReference type="NCBIfam" id="TIGR00421">
    <property type="entry name" value="ubiX_pad"/>
    <property type="match status" value="1"/>
</dbReference>
<dbReference type="PANTHER" id="PTHR43374">
    <property type="entry name" value="FLAVIN PRENYLTRANSFERASE"/>
    <property type="match status" value="1"/>
</dbReference>
<dbReference type="PANTHER" id="PTHR43374:SF1">
    <property type="entry name" value="FLAVIN PRENYLTRANSFERASE PAD1, MITOCHONDRIAL"/>
    <property type="match status" value="1"/>
</dbReference>
<dbReference type="Pfam" id="PF02441">
    <property type="entry name" value="Flavoprotein"/>
    <property type="match status" value="1"/>
</dbReference>
<dbReference type="SUPFAM" id="SSF52507">
    <property type="entry name" value="Homo-oligomeric flavin-containing Cys decarboxylases, HFCD"/>
    <property type="match status" value="1"/>
</dbReference>
<accession>O66811</accession>
<gene>
    <name evidence="1" type="primary">ubiX</name>
    <name type="ordered locus">aq_528</name>
</gene>
<feature type="chain" id="PRO_0000134954" description="Flavin prenyltransferase UbiX">
    <location>
        <begin position="1"/>
        <end position="189"/>
    </location>
</feature>
<feature type="binding site" evidence="1">
    <location>
        <begin position="10"/>
        <end position="12"/>
    </location>
    <ligand>
        <name>FMN</name>
        <dbReference type="ChEBI" id="CHEBI:58210"/>
    </ligand>
</feature>
<feature type="binding site" evidence="1">
    <location>
        <position position="36"/>
    </location>
    <ligand>
        <name>FMN</name>
        <dbReference type="ChEBI" id="CHEBI:58210"/>
    </ligand>
</feature>
<feature type="binding site" evidence="1">
    <location>
        <begin position="91"/>
        <end position="94"/>
    </location>
    <ligand>
        <name>FMN</name>
        <dbReference type="ChEBI" id="CHEBI:58210"/>
    </ligand>
</feature>
<feature type="binding site" evidence="1">
    <location>
        <position position="126"/>
    </location>
    <ligand>
        <name>FMN</name>
        <dbReference type="ChEBI" id="CHEBI:58210"/>
    </ligand>
</feature>
<feature type="binding site" evidence="1">
    <location>
        <position position="156"/>
    </location>
    <ligand>
        <name>dimethylallyl phosphate</name>
        <dbReference type="ChEBI" id="CHEBI:88052"/>
    </ligand>
</feature>
<feature type="binding site" evidence="1">
    <location>
        <position position="172"/>
    </location>
    <ligand>
        <name>dimethylallyl phosphate</name>
        <dbReference type="ChEBI" id="CHEBI:88052"/>
    </ligand>
</feature>
<feature type="strand" evidence="2">
    <location>
        <begin position="3"/>
        <end position="8"/>
    </location>
</feature>
<feature type="helix" evidence="2">
    <location>
        <begin position="14"/>
        <end position="26"/>
    </location>
</feature>
<feature type="strand" evidence="2">
    <location>
        <begin position="30"/>
        <end position="35"/>
    </location>
</feature>
<feature type="helix" evidence="2">
    <location>
        <begin position="37"/>
        <end position="45"/>
    </location>
</feature>
<feature type="strand" evidence="2">
    <location>
        <begin position="59"/>
        <end position="65"/>
    </location>
</feature>
<feature type="helix" evidence="2">
    <location>
        <begin position="72"/>
        <end position="74"/>
    </location>
</feature>
<feature type="helix" evidence="2">
    <location>
        <begin position="76"/>
        <end position="79"/>
    </location>
</feature>
<feature type="strand" evidence="2">
    <location>
        <begin position="82"/>
        <end position="90"/>
    </location>
</feature>
<feature type="helix" evidence="2">
    <location>
        <begin position="92"/>
        <end position="100"/>
    </location>
</feature>
<feature type="helix" evidence="2">
    <location>
        <begin position="106"/>
        <end position="117"/>
    </location>
</feature>
<feature type="strand" evidence="2">
    <location>
        <begin position="121"/>
        <end position="125"/>
    </location>
</feature>
<feature type="helix" evidence="2">
    <location>
        <begin position="132"/>
        <end position="143"/>
    </location>
</feature>
<feature type="strand" evidence="2">
    <location>
        <begin position="147"/>
        <end position="150"/>
    </location>
</feature>
<feature type="helix" evidence="2">
    <location>
        <begin position="162"/>
        <end position="176"/>
    </location>
</feature>
<sequence>MQKIALCITGASGVIYGIKLLQVLEELDFSVDLVISRNAKVVLKEEHSLTFEEVLKGLKNVRIHEENDFTSPLASGSRLVHYRGVYVVPCSTNTLSCIANGINKNLIHRVGEVALKERVPLVLLVREAPYNEIHLENMLKITRMGGVVVPASPAFYHKPQSIDDMINFVVGKLLDVLRIEHNLYKRWRG</sequence>
<keyword id="KW-0002">3D-structure</keyword>
<keyword id="KW-0285">Flavoprotein</keyword>
<keyword id="KW-0288">FMN</keyword>
<keyword id="KW-0637">Prenyltransferase</keyword>
<keyword id="KW-1185">Reference proteome</keyword>
<keyword id="KW-0808">Transferase</keyword>
<evidence type="ECO:0000255" key="1">
    <source>
        <dbReference type="HAMAP-Rule" id="MF_01984"/>
    </source>
</evidence>
<evidence type="ECO:0007829" key="2">
    <source>
        <dbReference type="PDB" id="2EJB"/>
    </source>
</evidence>
<name>UBIX_AQUAE</name>